<comment type="function">
    <text evidence="2">One of the essential components for the initiation of protein synthesis. Protects formylmethionyl-tRNA from spontaneous hydrolysis and promotes its binding to the 30S ribosomal subunits. Also involved in the hydrolysis of GTP during the formation of the 70S ribosomal complex.</text>
</comment>
<comment type="subcellular location">
    <subcellularLocation>
        <location evidence="2">Cytoplasm</location>
    </subcellularLocation>
</comment>
<comment type="similarity">
    <text evidence="2">Belongs to the TRAFAC class translation factor GTPase superfamily. Classic translation factor GTPase family. IF-2 subfamily.</text>
</comment>
<evidence type="ECO:0000250" key="1"/>
<evidence type="ECO:0000255" key="2">
    <source>
        <dbReference type="HAMAP-Rule" id="MF_00100"/>
    </source>
</evidence>
<evidence type="ECO:0000256" key="3">
    <source>
        <dbReference type="SAM" id="MobiDB-lite"/>
    </source>
</evidence>
<feature type="chain" id="PRO_1000075621" description="Translation initiation factor IF-2">
    <location>
        <begin position="1"/>
        <end position="896"/>
    </location>
</feature>
<feature type="domain" description="tr-type G">
    <location>
        <begin position="394"/>
        <end position="563"/>
    </location>
</feature>
<feature type="region of interest" description="Disordered" evidence="3">
    <location>
        <begin position="53"/>
        <end position="81"/>
    </location>
</feature>
<feature type="region of interest" description="Disordered" evidence="3">
    <location>
        <begin position="117"/>
        <end position="301"/>
    </location>
</feature>
<feature type="region of interest" description="G1" evidence="1">
    <location>
        <begin position="403"/>
        <end position="410"/>
    </location>
</feature>
<feature type="region of interest" description="G2" evidence="1">
    <location>
        <begin position="428"/>
        <end position="432"/>
    </location>
</feature>
<feature type="region of interest" description="G3" evidence="1">
    <location>
        <begin position="449"/>
        <end position="452"/>
    </location>
</feature>
<feature type="region of interest" description="G4" evidence="1">
    <location>
        <begin position="503"/>
        <end position="506"/>
    </location>
</feature>
<feature type="region of interest" description="G5" evidence="1">
    <location>
        <begin position="539"/>
        <end position="541"/>
    </location>
</feature>
<feature type="compositionally biased region" description="Polar residues" evidence="3">
    <location>
        <begin position="60"/>
        <end position="79"/>
    </location>
</feature>
<feature type="compositionally biased region" description="Basic and acidic residues" evidence="3">
    <location>
        <begin position="117"/>
        <end position="227"/>
    </location>
</feature>
<feature type="compositionally biased region" description="Low complexity" evidence="3">
    <location>
        <begin position="254"/>
        <end position="266"/>
    </location>
</feature>
<feature type="compositionally biased region" description="Basic and acidic residues" evidence="3">
    <location>
        <begin position="273"/>
        <end position="282"/>
    </location>
</feature>
<feature type="compositionally biased region" description="Low complexity" evidence="3">
    <location>
        <begin position="283"/>
        <end position="294"/>
    </location>
</feature>
<feature type="binding site" evidence="2">
    <location>
        <begin position="403"/>
        <end position="410"/>
    </location>
    <ligand>
        <name>GTP</name>
        <dbReference type="ChEBI" id="CHEBI:37565"/>
    </ligand>
</feature>
<feature type="binding site" evidence="2">
    <location>
        <begin position="449"/>
        <end position="453"/>
    </location>
    <ligand>
        <name>GTP</name>
        <dbReference type="ChEBI" id="CHEBI:37565"/>
    </ligand>
</feature>
<feature type="binding site" evidence="2">
    <location>
        <begin position="503"/>
        <end position="506"/>
    </location>
    <ligand>
        <name>GTP</name>
        <dbReference type="ChEBI" id="CHEBI:37565"/>
    </ligand>
</feature>
<organism>
    <name type="scientific">Shewanella sediminis (strain HAW-EB3)</name>
    <dbReference type="NCBI Taxonomy" id="425104"/>
    <lineage>
        <taxon>Bacteria</taxon>
        <taxon>Pseudomonadati</taxon>
        <taxon>Pseudomonadota</taxon>
        <taxon>Gammaproteobacteria</taxon>
        <taxon>Alteromonadales</taxon>
        <taxon>Shewanellaceae</taxon>
        <taxon>Shewanella</taxon>
    </lineage>
</organism>
<gene>
    <name evidence="2" type="primary">infB</name>
    <name type="ordered locus">Ssed_3389</name>
</gene>
<dbReference type="EMBL" id="CP000821">
    <property type="protein sequence ID" value="ABV37993.1"/>
    <property type="molecule type" value="Genomic_DNA"/>
</dbReference>
<dbReference type="RefSeq" id="WP_012143723.1">
    <property type="nucleotide sequence ID" value="NC_009831.1"/>
</dbReference>
<dbReference type="SMR" id="A8FYS0"/>
<dbReference type="STRING" id="425104.Ssed_3389"/>
<dbReference type="KEGG" id="sse:Ssed_3389"/>
<dbReference type="eggNOG" id="COG0532">
    <property type="taxonomic scope" value="Bacteria"/>
</dbReference>
<dbReference type="HOGENOM" id="CLU_006301_6_3_6"/>
<dbReference type="OrthoDB" id="9811804at2"/>
<dbReference type="Proteomes" id="UP000002015">
    <property type="component" value="Chromosome"/>
</dbReference>
<dbReference type="GO" id="GO:0005829">
    <property type="term" value="C:cytosol"/>
    <property type="evidence" value="ECO:0007669"/>
    <property type="project" value="TreeGrafter"/>
</dbReference>
<dbReference type="GO" id="GO:0005525">
    <property type="term" value="F:GTP binding"/>
    <property type="evidence" value="ECO:0007669"/>
    <property type="project" value="UniProtKB-KW"/>
</dbReference>
<dbReference type="GO" id="GO:0003924">
    <property type="term" value="F:GTPase activity"/>
    <property type="evidence" value="ECO:0007669"/>
    <property type="project" value="UniProtKB-UniRule"/>
</dbReference>
<dbReference type="GO" id="GO:0097216">
    <property type="term" value="F:guanosine tetraphosphate binding"/>
    <property type="evidence" value="ECO:0007669"/>
    <property type="project" value="UniProtKB-ARBA"/>
</dbReference>
<dbReference type="GO" id="GO:0003743">
    <property type="term" value="F:translation initiation factor activity"/>
    <property type="evidence" value="ECO:0007669"/>
    <property type="project" value="UniProtKB-UniRule"/>
</dbReference>
<dbReference type="CDD" id="cd01887">
    <property type="entry name" value="IF2_eIF5B"/>
    <property type="match status" value="1"/>
</dbReference>
<dbReference type="CDD" id="cd03702">
    <property type="entry name" value="IF2_mtIF2_II"/>
    <property type="match status" value="1"/>
</dbReference>
<dbReference type="CDD" id="cd03692">
    <property type="entry name" value="mtIF2_IVc"/>
    <property type="match status" value="1"/>
</dbReference>
<dbReference type="FunFam" id="2.40.30.10:FF:000007">
    <property type="entry name" value="Translation initiation factor IF-2"/>
    <property type="match status" value="1"/>
</dbReference>
<dbReference type="FunFam" id="2.40.30.10:FF:000008">
    <property type="entry name" value="Translation initiation factor IF-2"/>
    <property type="match status" value="1"/>
</dbReference>
<dbReference type="FunFam" id="3.40.50.10050:FF:000001">
    <property type="entry name" value="Translation initiation factor IF-2"/>
    <property type="match status" value="1"/>
</dbReference>
<dbReference type="FunFam" id="3.40.50.300:FF:000019">
    <property type="entry name" value="Translation initiation factor IF-2"/>
    <property type="match status" value="1"/>
</dbReference>
<dbReference type="Gene3D" id="3.40.50.300">
    <property type="entry name" value="P-loop containing nucleotide triphosphate hydrolases"/>
    <property type="match status" value="1"/>
</dbReference>
<dbReference type="Gene3D" id="3.30.56.50">
    <property type="entry name" value="Putative DNA-binding domain, N-terminal subdomain of bacterial translation initiation factor IF2"/>
    <property type="match status" value="1"/>
</dbReference>
<dbReference type="Gene3D" id="2.40.30.10">
    <property type="entry name" value="Translation factors"/>
    <property type="match status" value="2"/>
</dbReference>
<dbReference type="Gene3D" id="3.40.50.10050">
    <property type="entry name" value="Translation initiation factor IF- 2, domain 3"/>
    <property type="match status" value="1"/>
</dbReference>
<dbReference type="HAMAP" id="MF_00100_B">
    <property type="entry name" value="IF_2_B"/>
    <property type="match status" value="1"/>
</dbReference>
<dbReference type="InterPro" id="IPR009061">
    <property type="entry name" value="DNA-bd_dom_put_sf"/>
</dbReference>
<dbReference type="InterPro" id="IPR053905">
    <property type="entry name" value="EF-G-like_DII"/>
</dbReference>
<dbReference type="InterPro" id="IPR004161">
    <property type="entry name" value="EFTu-like_2"/>
</dbReference>
<dbReference type="InterPro" id="IPR013575">
    <property type="entry name" value="IF2_assoc_dom_bac"/>
</dbReference>
<dbReference type="InterPro" id="IPR044145">
    <property type="entry name" value="IF2_II"/>
</dbReference>
<dbReference type="InterPro" id="IPR006847">
    <property type="entry name" value="IF2_N"/>
</dbReference>
<dbReference type="InterPro" id="IPR027417">
    <property type="entry name" value="P-loop_NTPase"/>
</dbReference>
<dbReference type="InterPro" id="IPR005225">
    <property type="entry name" value="Small_GTP-bd"/>
</dbReference>
<dbReference type="InterPro" id="IPR000795">
    <property type="entry name" value="T_Tr_GTP-bd_dom"/>
</dbReference>
<dbReference type="InterPro" id="IPR000178">
    <property type="entry name" value="TF_IF2_bacterial-like"/>
</dbReference>
<dbReference type="InterPro" id="IPR015760">
    <property type="entry name" value="TIF_IF2"/>
</dbReference>
<dbReference type="InterPro" id="IPR023115">
    <property type="entry name" value="TIF_IF2_dom3"/>
</dbReference>
<dbReference type="InterPro" id="IPR036925">
    <property type="entry name" value="TIF_IF2_dom3_sf"/>
</dbReference>
<dbReference type="InterPro" id="IPR009000">
    <property type="entry name" value="Transl_B-barrel_sf"/>
</dbReference>
<dbReference type="NCBIfam" id="TIGR00487">
    <property type="entry name" value="IF-2"/>
    <property type="match status" value="1"/>
</dbReference>
<dbReference type="NCBIfam" id="TIGR00231">
    <property type="entry name" value="small_GTP"/>
    <property type="match status" value="1"/>
</dbReference>
<dbReference type="PANTHER" id="PTHR43381:SF5">
    <property type="entry name" value="TR-TYPE G DOMAIN-CONTAINING PROTEIN"/>
    <property type="match status" value="1"/>
</dbReference>
<dbReference type="PANTHER" id="PTHR43381">
    <property type="entry name" value="TRANSLATION INITIATION FACTOR IF-2-RELATED"/>
    <property type="match status" value="1"/>
</dbReference>
<dbReference type="Pfam" id="PF22042">
    <property type="entry name" value="EF-G_D2"/>
    <property type="match status" value="1"/>
</dbReference>
<dbReference type="Pfam" id="PF00009">
    <property type="entry name" value="GTP_EFTU"/>
    <property type="match status" value="1"/>
</dbReference>
<dbReference type="Pfam" id="PF03144">
    <property type="entry name" value="GTP_EFTU_D2"/>
    <property type="match status" value="1"/>
</dbReference>
<dbReference type="Pfam" id="PF11987">
    <property type="entry name" value="IF-2"/>
    <property type="match status" value="1"/>
</dbReference>
<dbReference type="Pfam" id="PF08364">
    <property type="entry name" value="IF2_assoc"/>
    <property type="match status" value="1"/>
</dbReference>
<dbReference type="Pfam" id="PF04760">
    <property type="entry name" value="IF2_N"/>
    <property type="match status" value="2"/>
</dbReference>
<dbReference type="SUPFAM" id="SSF52156">
    <property type="entry name" value="Initiation factor IF2/eIF5b, domain 3"/>
    <property type="match status" value="1"/>
</dbReference>
<dbReference type="SUPFAM" id="SSF52540">
    <property type="entry name" value="P-loop containing nucleoside triphosphate hydrolases"/>
    <property type="match status" value="1"/>
</dbReference>
<dbReference type="SUPFAM" id="SSF46955">
    <property type="entry name" value="Putative DNA-binding domain"/>
    <property type="match status" value="1"/>
</dbReference>
<dbReference type="SUPFAM" id="SSF50447">
    <property type="entry name" value="Translation proteins"/>
    <property type="match status" value="2"/>
</dbReference>
<dbReference type="PROSITE" id="PS51722">
    <property type="entry name" value="G_TR_2"/>
    <property type="match status" value="1"/>
</dbReference>
<dbReference type="PROSITE" id="PS01176">
    <property type="entry name" value="IF2"/>
    <property type="match status" value="1"/>
</dbReference>
<keyword id="KW-0963">Cytoplasm</keyword>
<keyword id="KW-0342">GTP-binding</keyword>
<keyword id="KW-0396">Initiation factor</keyword>
<keyword id="KW-0547">Nucleotide-binding</keyword>
<keyword id="KW-0648">Protein biosynthesis</keyword>
<keyword id="KW-1185">Reference proteome</keyword>
<proteinExistence type="inferred from homology"/>
<accession>A8FYS0</accession>
<protein>
    <recommendedName>
        <fullName evidence="2">Translation initiation factor IF-2</fullName>
    </recommendedName>
</protein>
<sequence length="896" mass="96155">MADTTVEKLASEVGKSADRLVEQFSEAGIKKSKADTVSESEKQQLLEFLKKQHGGESAPTKMTLQRKSVSTLSVGSGSASKDVKVEVRKKRTFVKRDPAADAEAEAAAKAEAEVKAAEEAASKAKADAEAKAKAEAKAKADAEAKEKAKASAAEKAKPVAVTAEEKAAQDEADKLQAAKDTAAKAKADEEAKAAAEIARKLAEENSARWAEEEKQRKESEKTGDHHVTTSTEARAAEDTADANAEKRGRRPRKATPAPAAAPANTGKGKRRGGKDNRRDSRNARGGRNARNNRSVAPESMDHAFTKPVAAVKTDVSIGETVSVSELASKMSIKATEIIKQMMKMGSMVTINQVLDQETAQLVAEEMGHKVVLTRENELEHQVLADRDANIQAESRAPVVTIMGHVDHGKTSLLDYIRRAKVASGEAGGITQHIGAYHVETDNGMITFLDTPGHAAFTAMRARGAQATDIVILVVAADDGVMPQTIEAIQHAKAGGVPLIVAVNKIDKPEADPERVKSELSQHGVMSEDWGGNNMFVHVSAKSGEGIDELLEGILLEAEVLELKAIKEGMAAGVVVESKLDKGRGPVATVLVQEGTLKQGDIVLCGLEYGKVRAMRDENGRAIKEAGPSIPVEILGLSGVPSAGDEATVVRDERKAREVALYRQGKFRDVKLARQQKSKLENMFANMVEGEVQELNIILKADVQGSLEAIADSLNKLSTDEVKVNIIARGVGGLTETDASLAAASNAIMIGFNIRADAQARKVIDAESVDLRYYSVIYHLIDEVRNAMSGLLAPEFKQVILGLAEVRDVFKSPKIGAIAGCMVTEGTIKRSAPIRVLRENVVIYEGELESLRRFKDDVADVRNGMECGIGVKNYNDVRVGDQIEVFETIEIARSLEE</sequence>
<name>IF2_SHESH</name>
<reference key="1">
    <citation type="submission" date="2007-08" db="EMBL/GenBank/DDBJ databases">
        <title>Complete sequence of Shewanella sediminis HAW-EB3.</title>
        <authorList>
            <consortium name="US DOE Joint Genome Institute"/>
            <person name="Copeland A."/>
            <person name="Lucas S."/>
            <person name="Lapidus A."/>
            <person name="Barry K."/>
            <person name="Glavina del Rio T."/>
            <person name="Dalin E."/>
            <person name="Tice H."/>
            <person name="Pitluck S."/>
            <person name="Chertkov O."/>
            <person name="Brettin T."/>
            <person name="Bruce D."/>
            <person name="Detter J.C."/>
            <person name="Han C."/>
            <person name="Schmutz J."/>
            <person name="Larimer F."/>
            <person name="Land M."/>
            <person name="Hauser L."/>
            <person name="Kyrpides N."/>
            <person name="Kim E."/>
            <person name="Zhao J.-S."/>
            <person name="Richardson P."/>
        </authorList>
    </citation>
    <scope>NUCLEOTIDE SEQUENCE [LARGE SCALE GENOMIC DNA]</scope>
    <source>
        <strain>HAW-EB3</strain>
    </source>
</reference>